<keyword id="KW-0040">ANK repeat</keyword>
<keyword id="KW-1185">Reference proteome</keyword>
<keyword id="KW-0677">Repeat</keyword>
<keyword id="KW-0728">SH3 domain</keyword>
<accession>Q6DD51</accession>
<feature type="chain" id="PRO_0000066985" description="Caskin-2">
    <location>
        <begin position="1"/>
        <end position="1205"/>
    </location>
</feature>
<feature type="repeat" description="ANK 1">
    <location>
        <begin position="48"/>
        <end position="77"/>
    </location>
</feature>
<feature type="repeat" description="ANK 2">
    <location>
        <begin position="81"/>
        <end position="110"/>
    </location>
</feature>
<feature type="repeat" description="ANK 3">
    <location>
        <begin position="114"/>
        <end position="143"/>
    </location>
</feature>
<feature type="repeat" description="ANK 4">
    <location>
        <begin position="147"/>
        <end position="176"/>
    </location>
</feature>
<feature type="repeat" description="ANK 5">
    <location>
        <begin position="188"/>
        <end position="217"/>
    </location>
</feature>
<feature type="repeat" description="ANK 6">
    <location>
        <begin position="220"/>
        <end position="249"/>
    </location>
</feature>
<feature type="domain" description="SH3" evidence="2">
    <location>
        <begin position="281"/>
        <end position="347"/>
    </location>
</feature>
<feature type="domain" description="SAM 1" evidence="1">
    <location>
        <begin position="468"/>
        <end position="531"/>
    </location>
</feature>
<feature type="domain" description="SAM 2" evidence="1">
    <location>
        <begin position="537"/>
        <end position="601"/>
    </location>
</feature>
<feature type="region of interest" description="Disordered" evidence="3">
    <location>
        <begin position="377"/>
        <end position="411"/>
    </location>
</feature>
<feature type="region of interest" description="Disordered" evidence="3">
    <location>
        <begin position="666"/>
        <end position="689"/>
    </location>
</feature>
<feature type="region of interest" description="Disordered" evidence="3">
    <location>
        <begin position="784"/>
        <end position="964"/>
    </location>
</feature>
<feature type="region of interest" description="Disordered" evidence="3">
    <location>
        <begin position="984"/>
        <end position="1054"/>
    </location>
</feature>
<feature type="region of interest" description="Disordered" evidence="3">
    <location>
        <begin position="1132"/>
        <end position="1155"/>
    </location>
</feature>
<feature type="compositionally biased region" description="Polar residues" evidence="3">
    <location>
        <begin position="377"/>
        <end position="388"/>
    </location>
</feature>
<feature type="compositionally biased region" description="Polar residues" evidence="3">
    <location>
        <begin position="398"/>
        <end position="411"/>
    </location>
</feature>
<feature type="compositionally biased region" description="Low complexity" evidence="3">
    <location>
        <begin position="666"/>
        <end position="687"/>
    </location>
</feature>
<feature type="compositionally biased region" description="Polar residues" evidence="3">
    <location>
        <begin position="823"/>
        <end position="840"/>
    </location>
</feature>
<feature type="compositionally biased region" description="Low complexity" evidence="3">
    <location>
        <begin position="908"/>
        <end position="919"/>
    </location>
</feature>
<feature type="compositionally biased region" description="Polar residues" evidence="3">
    <location>
        <begin position="942"/>
        <end position="959"/>
    </location>
</feature>
<feature type="compositionally biased region" description="Basic and acidic residues" evidence="3">
    <location>
        <begin position="1009"/>
        <end position="1037"/>
    </location>
</feature>
<feature type="compositionally biased region" description="Polar residues" evidence="3">
    <location>
        <begin position="1042"/>
        <end position="1054"/>
    </location>
</feature>
<feature type="compositionally biased region" description="Polar residues" evidence="3">
    <location>
        <begin position="1137"/>
        <end position="1155"/>
    </location>
</feature>
<proteinExistence type="evidence at transcript level"/>
<reference key="1">
    <citation type="submission" date="2004-07" db="EMBL/GenBank/DDBJ databases">
        <authorList>
            <consortium name="NIH - Xenopus Gene Collection (XGC) project"/>
        </authorList>
    </citation>
    <scope>NUCLEOTIDE SEQUENCE [LARGE SCALE MRNA]</scope>
    <source>
        <tissue>Spleen</tissue>
    </source>
</reference>
<gene>
    <name type="primary">caskin2</name>
</gene>
<evidence type="ECO:0000255" key="1">
    <source>
        <dbReference type="PROSITE-ProRule" id="PRU00184"/>
    </source>
</evidence>
<evidence type="ECO:0000255" key="2">
    <source>
        <dbReference type="PROSITE-ProRule" id="PRU00192"/>
    </source>
</evidence>
<evidence type="ECO:0000256" key="3">
    <source>
        <dbReference type="SAM" id="MobiDB-lite"/>
    </source>
</evidence>
<name>CSKI2_XENLA</name>
<organism>
    <name type="scientific">Xenopus laevis</name>
    <name type="common">African clawed frog</name>
    <dbReference type="NCBI Taxonomy" id="8355"/>
    <lineage>
        <taxon>Eukaryota</taxon>
        <taxon>Metazoa</taxon>
        <taxon>Chordata</taxon>
        <taxon>Craniata</taxon>
        <taxon>Vertebrata</taxon>
        <taxon>Euteleostomi</taxon>
        <taxon>Amphibia</taxon>
        <taxon>Batrachia</taxon>
        <taxon>Anura</taxon>
        <taxon>Pipoidea</taxon>
        <taxon>Pipidae</taxon>
        <taxon>Xenopodinae</taxon>
        <taxon>Xenopus</taxon>
        <taxon>Xenopus</taxon>
    </lineage>
</organism>
<sequence length="1205" mass="130919">MGRENELIQAVKSGDVGAVQKFLAKFRTPKSKLLGSTKRLNVNHQDADGFSALHHAALSGNSELLLLLLEMQASVDIKDGNGMRPLHYAAWQGQPEPVRLLLRASASVNAASHDGQIPLHLAAQYGHYEVSETLLQHQSNPCHVNKGKKTPLDLACEFGRVKVVQLLLNSHLCVSLLEGTSKDPTDPNFTTPLHLAAKNGHLEVIRLLLKLGIEINKVTKMGTALHEAALCGKTEVVKLLIENGVDVNIRNTYNQTALDIVNQFTTTHASIDIKQLLREASGILKVRALKDFWNAHDPTALNIRAGDLITVLEQHPDGRWKGHIHDPQKGTDRVGFFPPSIVEVISKRLGSTLSRNITVPSHQHLAKTVLTLPIQHSPGSQLGINPDTSVAGDRHSVGSESSVRSAGSGQSCEGQQINTALLIENAQTMDFGSENLQNCQTFPGPVSGHHLSTILPVEKNPGDYLQGKDAEQIFCWLRGFQMETYVGNFISAGYDLPTIMRVTPEDLTAIGVTKPGHRKMISTEIGKLIVADGLPQQIPVDLWDWLSQLGLPEYHKQLSENGYESLSTVTELTWEGLQEIGIHRLGHQKKLLLGVKRLLDLQKGYPIGGTLRRRILGSQDTVAVVEPPENGDLPVTPKLLTFQGAELSQELQSALTRGNEQLCTGRRSFSQESISSRSQGSGHSQESASSYPVLPVHLQGVDLNLPERNHPEGTDQILQNHWVPNGCLIQPEPPAPPPKPALKKRSLSACRYALSDGEPEEEEEKKIATAGTGTLSTYATLTRRPGRSCLTNGKPEKKVQRSQSFAVRARRKGPPPPPPKRLSSMSSAEGQSPEGQSSVKTIAAQLKDIGRGTGFSASTSKATDTEVLEGSGTRRRTVSESAAGLGGRLSLPLTTKKDEEEERKEEPISSQHSSSESIPFAEEGNLTIKQRPKPPGAKLEQDATSELSPTQESQLQSAEAQRHLESSAVLAKPVTVVLAQARPQIAAKPQIGPKPDTGARAPPATSIPKNEEHDFNLTESDTVKRRPKVKEKEEESPKAPLANNSPSLIPSQEPLTQDTLIAKIADIDKRLLSLGEVEDSVKKTGIDTRSTGVSISQTHLVISGPQQVLQKPSRAVTGPLFPAGSILWDEESEASSREQTCIPQQSISNSDKGPPVFTSSLQNTEELQDTRGKSCRETVQLTKNILDDISTMFDDLAEQLEAMLD</sequence>
<dbReference type="EMBL" id="BC077777">
    <property type="protein sequence ID" value="AAH77777.1"/>
    <property type="molecule type" value="mRNA"/>
</dbReference>
<dbReference type="RefSeq" id="NP_001086927.1">
    <property type="nucleotide sequence ID" value="NM_001093458.1"/>
</dbReference>
<dbReference type="SMR" id="Q6DD51"/>
<dbReference type="GeneID" id="446762"/>
<dbReference type="KEGG" id="xla:446762"/>
<dbReference type="AGR" id="Xenbase:XB-GENE-17346434"/>
<dbReference type="CTD" id="446762"/>
<dbReference type="Xenbase" id="XB-GENE-17346434">
    <property type="gene designation" value="caskin2.S"/>
</dbReference>
<dbReference type="OrthoDB" id="6156898at2759"/>
<dbReference type="Proteomes" id="UP000186698">
    <property type="component" value="Chromosome 9_10S"/>
</dbReference>
<dbReference type="Bgee" id="446762">
    <property type="expression patterns" value="Expressed in lung and 18 other cell types or tissues"/>
</dbReference>
<dbReference type="CDD" id="cd09497">
    <property type="entry name" value="SAM_caskin1_2_repeat1"/>
    <property type="match status" value="1"/>
</dbReference>
<dbReference type="CDD" id="cd09498">
    <property type="entry name" value="SAM_caskin1_2_repeat2"/>
    <property type="match status" value="1"/>
</dbReference>
<dbReference type="CDD" id="cd12063">
    <property type="entry name" value="SH3_Caskin2"/>
    <property type="match status" value="1"/>
</dbReference>
<dbReference type="FunFam" id="1.10.150.50:FF:000032">
    <property type="entry name" value="caskin-1 isoform X1"/>
    <property type="match status" value="1"/>
</dbReference>
<dbReference type="FunFam" id="1.25.40.20:FF:000225">
    <property type="entry name" value="caskin-1 isoform X1"/>
    <property type="match status" value="1"/>
</dbReference>
<dbReference type="FunFam" id="2.30.30.40:FF:000062">
    <property type="entry name" value="caskin-2 isoform X1"/>
    <property type="match status" value="1"/>
</dbReference>
<dbReference type="FunFam" id="1.10.150.50:FF:000028">
    <property type="entry name" value="caskin-2 isoform X2"/>
    <property type="match status" value="1"/>
</dbReference>
<dbReference type="FunFam" id="1.25.40.20:FF:000042">
    <property type="entry name" value="caskin-2 isoform X2"/>
    <property type="match status" value="1"/>
</dbReference>
<dbReference type="Gene3D" id="1.25.40.20">
    <property type="entry name" value="Ankyrin repeat-containing domain"/>
    <property type="match status" value="2"/>
</dbReference>
<dbReference type="Gene3D" id="2.30.30.40">
    <property type="entry name" value="SH3 Domains"/>
    <property type="match status" value="1"/>
</dbReference>
<dbReference type="Gene3D" id="1.10.150.50">
    <property type="entry name" value="Transcription Factor, Ets-1"/>
    <property type="match status" value="2"/>
</dbReference>
<dbReference type="InterPro" id="IPR033635">
    <property type="entry name" value="ANKS1/Caskin"/>
</dbReference>
<dbReference type="InterPro" id="IPR002110">
    <property type="entry name" value="Ankyrin_rpt"/>
</dbReference>
<dbReference type="InterPro" id="IPR036770">
    <property type="entry name" value="Ankyrin_rpt-contain_sf"/>
</dbReference>
<dbReference type="InterPro" id="IPR035497">
    <property type="entry name" value="Caskin1/2_SAM_1"/>
</dbReference>
<dbReference type="InterPro" id="IPR035498">
    <property type="entry name" value="Caskin1/2_SAM_2"/>
</dbReference>
<dbReference type="InterPro" id="IPR035499">
    <property type="entry name" value="Caskin2_SH3"/>
</dbReference>
<dbReference type="InterPro" id="IPR032117">
    <property type="entry name" value="Caskin_C"/>
</dbReference>
<dbReference type="InterPro" id="IPR001660">
    <property type="entry name" value="SAM"/>
</dbReference>
<dbReference type="InterPro" id="IPR013761">
    <property type="entry name" value="SAM/pointed_sf"/>
</dbReference>
<dbReference type="InterPro" id="IPR036028">
    <property type="entry name" value="SH3-like_dom_sf"/>
</dbReference>
<dbReference type="InterPro" id="IPR001452">
    <property type="entry name" value="SH3_domain"/>
</dbReference>
<dbReference type="PANTHER" id="PTHR24174">
    <property type="entry name" value="ANKYRIN REPEAT AND STERILE ALPHA MOTIF DOMAIN-CONTAINING PROTEIN 1"/>
    <property type="match status" value="1"/>
</dbReference>
<dbReference type="PANTHER" id="PTHR24174:SF18">
    <property type="entry name" value="CASKIN-2"/>
    <property type="match status" value="1"/>
</dbReference>
<dbReference type="Pfam" id="PF12796">
    <property type="entry name" value="Ank_2"/>
    <property type="match status" value="2"/>
</dbReference>
<dbReference type="Pfam" id="PF13637">
    <property type="entry name" value="Ank_4"/>
    <property type="match status" value="1"/>
</dbReference>
<dbReference type="Pfam" id="PF16907">
    <property type="entry name" value="Caskin-Pro-rich"/>
    <property type="match status" value="1"/>
</dbReference>
<dbReference type="Pfam" id="PF16632">
    <property type="entry name" value="Caskin-tail"/>
    <property type="match status" value="1"/>
</dbReference>
<dbReference type="Pfam" id="PF00536">
    <property type="entry name" value="SAM_1"/>
    <property type="match status" value="2"/>
</dbReference>
<dbReference type="Pfam" id="PF07653">
    <property type="entry name" value="SH3_2"/>
    <property type="match status" value="1"/>
</dbReference>
<dbReference type="PRINTS" id="PR01415">
    <property type="entry name" value="ANKYRIN"/>
</dbReference>
<dbReference type="SMART" id="SM00248">
    <property type="entry name" value="ANK"/>
    <property type="match status" value="6"/>
</dbReference>
<dbReference type="SMART" id="SM00454">
    <property type="entry name" value="SAM"/>
    <property type="match status" value="2"/>
</dbReference>
<dbReference type="SMART" id="SM00326">
    <property type="entry name" value="SH3"/>
    <property type="match status" value="1"/>
</dbReference>
<dbReference type="SUPFAM" id="SSF48403">
    <property type="entry name" value="Ankyrin repeat"/>
    <property type="match status" value="1"/>
</dbReference>
<dbReference type="SUPFAM" id="SSF47769">
    <property type="entry name" value="SAM/Pointed domain"/>
    <property type="match status" value="2"/>
</dbReference>
<dbReference type="SUPFAM" id="SSF50044">
    <property type="entry name" value="SH3-domain"/>
    <property type="match status" value="1"/>
</dbReference>
<dbReference type="PROSITE" id="PS50297">
    <property type="entry name" value="ANK_REP_REGION"/>
    <property type="match status" value="1"/>
</dbReference>
<dbReference type="PROSITE" id="PS50088">
    <property type="entry name" value="ANK_REPEAT"/>
    <property type="match status" value="5"/>
</dbReference>
<dbReference type="PROSITE" id="PS50105">
    <property type="entry name" value="SAM_DOMAIN"/>
    <property type="match status" value="2"/>
</dbReference>
<dbReference type="PROSITE" id="PS50002">
    <property type="entry name" value="SH3"/>
    <property type="match status" value="1"/>
</dbReference>
<protein>
    <recommendedName>
        <fullName>Caskin-2</fullName>
    </recommendedName>
</protein>